<protein>
    <recommendedName>
        <fullName evidence="2">Translation initiation factor IF-2</fullName>
    </recommendedName>
</protein>
<feature type="chain" id="PRO_0000228167" description="Translation initiation factor IF-2">
    <location>
        <begin position="1"/>
        <end position="686"/>
    </location>
</feature>
<feature type="domain" description="tr-type G">
    <location>
        <begin position="188"/>
        <end position="357"/>
    </location>
</feature>
<feature type="region of interest" description="Disordered" evidence="3">
    <location>
        <begin position="54"/>
        <end position="105"/>
    </location>
</feature>
<feature type="region of interest" description="G1" evidence="1">
    <location>
        <begin position="197"/>
        <end position="204"/>
    </location>
</feature>
<feature type="region of interest" description="G2" evidence="1">
    <location>
        <begin position="222"/>
        <end position="226"/>
    </location>
</feature>
<feature type="region of interest" description="G3" evidence="1">
    <location>
        <begin position="243"/>
        <end position="246"/>
    </location>
</feature>
<feature type="region of interest" description="G4" evidence="1">
    <location>
        <begin position="297"/>
        <end position="300"/>
    </location>
</feature>
<feature type="region of interest" description="G5" evidence="1">
    <location>
        <begin position="333"/>
        <end position="335"/>
    </location>
</feature>
<feature type="compositionally biased region" description="Basic residues" evidence="3">
    <location>
        <begin position="69"/>
        <end position="81"/>
    </location>
</feature>
<feature type="binding site" evidence="2">
    <location>
        <begin position="197"/>
        <end position="204"/>
    </location>
    <ligand>
        <name>GTP</name>
        <dbReference type="ChEBI" id="CHEBI:37565"/>
    </ligand>
</feature>
<feature type="binding site" evidence="2">
    <location>
        <begin position="243"/>
        <end position="247"/>
    </location>
    <ligand>
        <name>GTP</name>
        <dbReference type="ChEBI" id="CHEBI:37565"/>
    </ligand>
</feature>
<feature type="binding site" evidence="2">
    <location>
        <begin position="297"/>
        <end position="300"/>
    </location>
    <ligand>
        <name>GTP</name>
        <dbReference type="ChEBI" id="CHEBI:37565"/>
    </ligand>
</feature>
<gene>
    <name evidence="2" type="primary">infB</name>
    <name type="ordered locus">BT9727_3554</name>
</gene>
<evidence type="ECO:0000250" key="1"/>
<evidence type="ECO:0000255" key="2">
    <source>
        <dbReference type="HAMAP-Rule" id="MF_00100"/>
    </source>
</evidence>
<evidence type="ECO:0000256" key="3">
    <source>
        <dbReference type="SAM" id="MobiDB-lite"/>
    </source>
</evidence>
<accession>Q6HF02</accession>
<keyword id="KW-0963">Cytoplasm</keyword>
<keyword id="KW-0342">GTP-binding</keyword>
<keyword id="KW-0396">Initiation factor</keyword>
<keyword id="KW-0547">Nucleotide-binding</keyword>
<keyword id="KW-0648">Protein biosynthesis</keyword>
<dbReference type="EMBL" id="AE017355">
    <property type="protein sequence ID" value="AAT61122.1"/>
    <property type="molecule type" value="Genomic_DNA"/>
</dbReference>
<dbReference type="RefSeq" id="WP_000036341.1">
    <property type="nucleotide sequence ID" value="NC_005957.1"/>
</dbReference>
<dbReference type="RefSeq" id="YP_037874.1">
    <property type="nucleotide sequence ID" value="NC_005957.1"/>
</dbReference>
<dbReference type="SMR" id="Q6HF02"/>
<dbReference type="KEGG" id="btk:BT9727_3554"/>
<dbReference type="PATRIC" id="fig|281309.8.peg.3791"/>
<dbReference type="HOGENOM" id="CLU_006301_5_1_9"/>
<dbReference type="Proteomes" id="UP000001301">
    <property type="component" value="Chromosome"/>
</dbReference>
<dbReference type="GO" id="GO:0005829">
    <property type="term" value="C:cytosol"/>
    <property type="evidence" value="ECO:0007669"/>
    <property type="project" value="TreeGrafter"/>
</dbReference>
<dbReference type="GO" id="GO:0005525">
    <property type="term" value="F:GTP binding"/>
    <property type="evidence" value="ECO:0007669"/>
    <property type="project" value="UniProtKB-KW"/>
</dbReference>
<dbReference type="GO" id="GO:0003924">
    <property type="term" value="F:GTPase activity"/>
    <property type="evidence" value="ECO:0007669"/>
    <property type="project" value="UniProtKB-UniRule"/>
</dbReference>
<dbReference type="GO" id="GO:0003743">
    <property type="term" value="F:translation initiation factor activity"/>
    <property type="evidence" value="ECO:0007669"/>
    <property type="project" value="UniProtKB-UniRule"/>
</dbReference>
<dbReference type="CDD" id="cd01887">
    <property type="entry name" value="IF2_eIF5B"/>
    <property type="match status" value="1"/>
</dbReference>
<dbReference type="CDD" id="cd03702">
    <property type="entry name" value="IF2_mtIF2_II"/>
    <property type="match status" value="1"/>
</dbReference>
<dbReference type="CDD" id="cd03692">
    <property type="entry name" value="mtIF2_IVc"/>
    <property type="match status" value="1"/>
</dbReference>
<dbReference type="FunFam" id="1.10.10.2480:FF:000001">
    <property type="entry name" value="Translation initiation factor IF-2"/>
    <property type="match status" value="1"/>
</dbReference>
<dbReference type="FunFam" id="2.40.30.10:FF:000007">
    <property type="entry name" value="Translation initiation factor IF-2"/>
    <property type="match status" value="1"/>
</dbReference>
<dbReference type="FunFam" id="2.40.30.10:FF:000008">
    <property type="entry name" value="Translation initiation factor IF-2"/>
    <property type="match status" value="1"/>
</dbReference>
<dbReference type="FunFam" id="3.40.50.10050:FF:000001">
    <property type="entry name" value="Translation initiation factor IF-2"/>
    <property type="match status" value="1"/>
</dbReference>
<dbReference type="FunFam" id="3.40.50.300:FF:000019">
    <property type="entry name" value="Translation initiation factor IF-2"/>
    <property type="match status" value="1"/>
</dbReference>
<dbReference type="Gene3D" id="1.10.10.2480">
    <property type="match status" value="1"/>
</dbReference>
<dbReference type="Gene3D" id="3.40.50.300">
    <property type="entry name" value="P-loop containing nucleotide triphosphate hydrolases"/>
    <property type="match status" value="1"/>
</dbReference>
<dbReference type="Gene3D" id="2.40.30.10">
    <property type="entry name" value="Translation factors"/>
    <property type="match status" value="2"/>
</dbReference>
<dbReference type="Gene3D" id="3.40.50.10050">
    <property type="entry name" value="Translation initiation factor IF- 2, domain 3"/>
    <property type="match status" value="1"/>
</dbReference>
<dbReference type="HAMAP" id="MF_00100_B">
    <property type="entry name" value="IF_2_B"/>
    <property type="match status" value="1"/>
</dbReference>
<dbReference type="InterPro" id="IPR053905">
    <property type="entry name" value="EF-G-like_DII"/>
</dbReference>
<dbReference type="InterPro" id="IPR044145">
    <property type="entry name" value="IF2_II"/>
</dbReference>
<dbReference type="InterPro" id="IPR006847">
    <property type="entry name" value="IF2_N"/>
</dbReference>
<dbReference type="InterPro" id="IPR027417">
    <property type="entry name" value="P-loop_NTPase"/>
</dbReference>
<dbReference type="InterPro" id="IPR005225">
    <property type="entry name" value="Small_GTP-bd"/>
</dbReference>
<dbReference type="InterPro" id="IPR000795">
    <property type="entry name" value="T_Tr_GTP-bd_dom"/>
</dbReference>
<dbReference type="InterPro" id="IPR000178">
    <property type="entry name" value="TF_IF2_bacterial-like"/>
</dbReference>
<dbReference type="InterPro" id="IPR015760">
    <property type="entry name" value="TIF_IF2"/>
</dbReference>
<dbReference type="InterPro" id="IPR023115">
    <property type="entry name" value="TIF_IF2_dom3"/>
</dbReference>
<dbReference type="InterPro" id="IPR036925">
    <property type="entry name" value="TIF_IF2_dom3_sf"/>
</dbReference>
<dbReference type="InterPro" id="IPR009000">
    <property type="entry name" value="Transl_B-barrel_sf"/>
</dbReference>
<dbReference type="NCBIfam" id="TIGR00487">
    <property type="entry name" value="IF-2"/>
    <property type="match status" value="1"/>
</dbReference>
<dbReference type="NCBIfam" id="TIGR00231">
    <property type="entry name" value="small_GTP"/>
    <property type="match status" value="1"/>
</dbReference>
<dbReference type="PANTHER" id="PTHR43381:SF5">
    <property type="entry name" value="TR-TYPE G DOMAIN-CONTAINING PROTEIN"/>
    <property type="match status" value="1"/>
</dbReference>
<dbReference type="PANTHER" id="PTHR43381">
    <property type="entry name" value="TRANSLATION INITIATION FACTOR IF-2-RELATED"/>
    <property type="match status" value="1"/>
</dbReference>
<dbReference type="Pfam" id="PF22042">
    <property type="entry name" value="EF-G_D2"/>
    <property type="match status" value="1"/>
</dbReference>
<dbReference type="Pfam" id="PF00009">
    <property type="entry name" value="GTP_EFTU"/>
    <property type="match status" value="1"/>
</dbReference>
<dbReference type="Pfam" id="PF11987">
    <property type="entry name" value="IF-2"/>
    <property type="match status" value="1"/>
</dbReference>
<dbReference type="Pfam" id="PF04760">
    <property type="entry name" value="IF2_N"/>
    <property type="match status" value="2"/>
</dbReference>
<dbReference type="SUPFAM" id="SSF52156">
    <property type="entry name" value="Initiation factor IF2/eIF5b, domain 3"/>
    <property type="match status" value="1"/>
</dbReference>
<dbReference type="SUPFAM" id="SSF52540">
    <property type="entry name" value="P-loop containing nucleoside triphosphate hydrolases"/>
    <property type="match status" value="1"/>
</dbReference>
<dbReference type="SUPFAM" id="SSF50447">
    <property type="entry name" value="Translation proteins"/>
    <property type="match status" value="2"/>
</dbReference>
<dbReference type="PROSITE" id="PS51722">
    <property type="entry name" value="G_TR_2"/>
    <property type="match status" value="1"/>
</dbReference>
<dbReference type="PROSITE" id="PS01176">
    <property type="entry name" value="IF2"/>
    <property type="match status" value="1"/>
</dbReference>
<reference key="1">
    <citation type="journal article" date="2006" name="J. Bacteriol.">
        <title>Pathogenomic sequence analysis of Bacillus cereus and Bacillus thuringiensis isolates closely related to Bacillus anthracis.</title>
        <authorList>
            <person name="Han C.S."/>
            <person name="Xie G."/>
            <person name="Challacombe J.F."/>
            <person name="Altherr M.R."/>
            <person name="Bhotika S.S."/>
            <person name="Bruce D."/>
            <person name="Campbell C.S."/>
            <person name="Campbell M.L."/>
            <person name="Chen J."/>
            <person name="Chertkov O."/>
            <person name="Cleland C."/>
            <person name="Dimitrijevic M."/>
            <person name="Doggett N.A."/>
            <person name="Fawcett J.J."/>
            <person name="Glavina T."/>
            <person name="Goodwin L.A."/>
            <person name="Hill K.K."/>
            <person name="Hitchcock P."/>
            <person name="Jackson P.J."/>
            <person name="Keim P."/>
            <person name="Kewalramani A.R."/>
            <person name="Longmire J."/>
            <person name="Lucas S."/>
            <person name="Malfatti S."/>
            <person name="McMurry K."/>
            <person name="Meincke L.J."/>
            <person name="Misra M."/>
            <person name="Moseman B.L."/>
            <person name="Mundt M."/>
            <person name="Munk A.C."/>
            <person name="Okinaka R.T."/>
            <person name="Parson-Quintana B."/>
            <person name="Reilly L.P."/>
            <person name="Richardson P."/>
            <person name="Robinson D.L."/>
            <person name="Rubin E."/>
            <person name="Saunders E."/>
            <person name="Tapia R."/>
            <person name="Tesmer J.G."/>
            <person name="Thayer N."/>
            <person name="Thompson L.S."/>
            <person name="Tice H."/>
            <person name="Ticknor L.O."/>
            <person name="Wills P.L."/>
            <person name="Brettin T.S."/>
            <person name="Gilna P."/>
        </authorList>
    </citation>
    <scope>NUCLEOTIDE SEQUENCE [LARGE SCALE GENOMIC DNA]</scope>
    <source>
        <strain>97-27</strain>
    </source>
</reference>
<sequence>MSKIRVHEYAKKHNISSKDLMTKLKEMNIEVSNHMTMLDDEVVNKLDNEYQAEKPSVADEFEVEEKVVRSKKNSNKKKKKGKGNEDKRQENFAGRQQTQTVETPDKITFSGSLTVGDLAKKLSKEPSEIIKKLFMLGIMATINQDLDKDTIELIANDYGIEVEEEVIVSETEFETFIDEQDDEENLKERPAVVTIMGHVDHGKTTLLDSIRNSKVTAGEAGGITQHIGAYQVEVNDKKITFLDTPGHAAFTTMRARGAQVTDITILVVAADDGVMPQTVEAINHAKAAGVPIIVAVNKMDKPAANPDRVMQELTEYELVPEAWGGDTIFVPISAIQGEGIDNLLEMILLVSEVEEYKANPNRYATGTVIEAQLDKGKGTIATLLVQNGTLRVGDPIVVGTSFGRVRAMVSDIGRRVKVAGPSTPVEITGLNEVPQAGDRFMAFADEKKARQIGESRAQEALLAQRGEKSKLSLEDLFQQIQEGDVKEINLIVKADVQGSVEAMAASLRKIDVEGVKVKIIHTGVGAITESDIILASASNAIVIGFNVRPDVNAKRTAELENVDIRLHRIIYKVIEEIEAAMQGMLDPEFEEKVIGQAEVRQTFKVTKVGTIAGCYVTDGKITRDSGVRIIRDGVVIFEGQLDTLKRFKDDVKEVAQNYECGITIERYNDLKEGDIIEAYIMEEVKR</sequence>
<name>IF2_BACHK</name>
<comment type="function">
    <text evidence="2">One of the essential components for the initiation of protein synthesis. Protects formylmethionyl-tRNA from spontaneous hydrolysis and promotes its binding to the 30S ribosomal subunits. Also involved in the hydrolysis of GTP during the formation of the 70S ribosomal complex.</text>
</comment>
<comment type="subcellular location">
    <subcellularLocation>
        <location evidence="2">Cytoplasm</location>
    </subcellularLocation>
</comment>
<comment type="similarity">
    <text evidence="2">Belongs to the TRAFAC class translation factor GTPase superfamily. Classic translation factor GTPase family. IF-2 subfamily.</text>
</comment>
<organism>
    <name type="scientific">Bacillus thuringiensis subsp. konkukian (strain 97-27)</name>
    <dbReference type="NCBI Taxonomy" id="281309"/>
    <lineage>
        <taxon>Bacteria</taxon>
        <taxon>Bacillati</taxon>
        <taxon>Bacillota</taxon>
        <taxon>Bacilli</taxon>
        <taxon>Bacillales</taxon>
        <taxon>Bacillaceae</taxon>
        <taxon>Bacillus</taxon>
        <taxon>Bacillus cereus group</taxon>
    </lineage>
</organism>
<proteinExistence type="inferred from homology"/>